<organism>
    <name type="scientific">Alkaliphilus metalliredigens (strain QYMF)</name>
    <dbReference type="NCBI Taxonomy" id="293826"/>
    <lineage>
        <taxon>Bacteria</taxon>
        <taxon>Bacillati</taxon>
        <taxon>Bacillota</taxon>
        <taxon>Clostridia</taxon>
        <taxon>Peptostreptococcales</taxon>
        <taxon>Natronincolaceae</taxon>
        <taxon>Alkaliphilus</taxon>
    </lineage>
</organism>
<reference key="1">
    <citation type="journal article" date="2016" name="Genome Announc.">
        <title>Complete genome sequence of Alkaliphilus metalliredigens strain QYMF, an alkaliphilic and metal-reducing bacterium isolated from borax-contaminated leachate ponds.</title>
        <authorList>
            <person name="Hwang C."/>
            <person name="Copeland A."/>
            <person name="Lucas S."/>
            <person name="Lapidus A."/>
            <person name="Barry K."/>
            <person name="Detter J.C."/>
            <person name="Glavina Del Rio T."/>
            <person name="Hammon N."/>
            <person name="Israni S."/>
            <person name="Dalin E."/>
            <person name="Tice H."/>
            <person name="Pitluck S."/>
            <person name="Chertkov O."/>
            <person name="Brettin T."/>
            <person name="Bruce D."/>
            <person name="Han C."/>
            <person name="Schmutz J."/>
            <person name="Larimer F."/>
            <person name="Land M.L."/>
            <person name="Hauser L."/>
            <person name="Kyrpides N."/>
            <person name="Mikhailova N."/>
            <person name="Ye Q."/>
            <person name="Zhou J."/>
            <person name="Richardson P."/>
            <person name="Fields M.W."/>
        </authorList>
    </citation>
    <scope>NUCLEOTIDE SEQUENCE [LARGE SCALE GENOMIC DNA]</scope>
    <source>
        <strain>QYMF</strain>
    </source>
</reference>
<keyword id="KW-0169">Cobalamin biosynthesis</keyword>
<keyword id="KW-0315">Glutamine amidotransferase</keyword>
<keyword id="KW-1185">Reference proteome</keyword>
<accession>A6TU70</accession>
<feature type="chain" id="PRO_0000332319" description="Cobyric acid synthase">
    <location>
        <begin position="1"/>
        <end position="503"/>
    </location>
</feature>
<feature type="domain" description="GATase cobBQ-type" evidence="1">
    <location>
        <begin position="245"/>
        <end position="447"/>
    </location>
</feature>
<feature type="active site" description="Nucleophile" evidence="1">
    <location>
        <position position="326"/>
    </location>
</feature>
<feature type="active site" evidence="1">
    <location>
        <position position="439"/>
    </location>
</feature>
<evidence type="ECO:0000255" key="1">
    <source>
        <dbReference type="HAMAP-Rule" id="MF_00028"/>
    </source>
</evidence>
<protein>
    <recommendedName>
        <fullName evidence="1">Cobyric acid synthase</fullName>
    </recommendedName>
</protein>
<name>COBQ_ALKMQ</name>
<gene>
    <name evidence="1" type="primary">cobQ</name>
    <name type="ordered locus">Amet_3616</name>
</gene>
<comment type="function">
    <text evidence="1">Catalyzes amidations at positions B, D, E, and G on adenosylcobyrinic A,C-diamide. NH(2) groups are provided by glutamine, and one molecule of ATP is hydrogenolyzed for each amidation.</text>
</comment>
<comment type="pathway">
    <text evidence="1">Cofactor biosynthesis; adenosylcobalamin biosynthesis.</text>
</comment>
<comment type="similarity">
    <text evidence="1">Belongs to the CobB/CobQ family. CobQ subfamily.</text>
</comment>
<proteinExistence type="inferred from homology"/>
<sequence length="503" mass="55936">MVQGTASSVGKSLLTAALCRIFNEDGYRVVPFKSQNMALNSFVTEEGLEMGRAQVFQAEAARIKPQVKMNPILLKPTADSHAQVIIQGAVHGNMTAQEYHQFKPQLKSMLRDIYLDLETSNDIVVIEGAGSPAEINLRDQDIVNMGMAEIADSPVILVGDIDRGGVFASLYGTIMLLEESERSRVKGILINKFRGDLKILEPGLKMLEELINIPVIGVIPYERFDIEDEDSLSDRLQQKNHQESDISIAIIRLPHISNFTDFHLLEQMEGVNVNYIGRNQSIGRPDMIIIPGSKNTIGDLKYLQEVGLAAEIIEVHKTGTMICGICGGYQMLGNRILDPNHVESPEGEIQGLGLLDVETNFESEKVTTQVSGKILDHKLLEEIECGGIEVKGYEIHMGRTLRGATIKPFVKIEERLSKPVDDFDGAINEAGTVFGTYLHGIFDEISLVEKIINGLLMKKGLPTIQQRNCSLEELKDREYSRLAKVVRENIDMKYIYKILEGEA</sequence>
<dbReference type="EMBL" id="CP000724">
    <property type="protein sequence ID" value="ABR49738.1"/>
    <property type="molecule type" value="Genomic_DNA"/>
</dbReference>
<dbReference type="SMR" id="A6TU70"/>
<dbReference type="STRING" id="293826.Amet_3616"/>
<dbReference type="KEGG" id="amt:Amet_3616"/>
<dbReference type="eggNOG" id="COG1492">
    <property type="taxonomic scope" value="Bacteria"/>
</dbReference>
<dbReference type="HOGENOM" id="CLU_019250_2_2_9"/>
<dbReference type="OrthoDB" id="9808302at2"/>
<dbReference type="UniPathway" id="UPA00148"/>
<dbReference type="Proteomes" id="UP000001572">
    <property type="component" value="Chromosome"/>
</dbReference>
<dbReference type="GO" id="GO:0015420">
    <property type="term" value="F:ABC-type vitamin B12 transporter activity"/>
    <property type="evidence" value="ECO:0007669"/>
    <property type="project" value="UniProtKB-UniRule"/>
</dbReference>
<dbReference type="GO" id="GO:0003824">
    <property type="term" value="F:catalytic activity"/>
    <property type="evidence" value="ECO:0007669"/>
    <property type="project" value="InterPro"/>
</dbReference>
<dbReference type="GO" id="GO:0009236">
    <property type="term" value="P:cobalamin biosynthetic process"/>
    <property type="evidence" value="ECO:0007669"/>
    <property type="project" value="UniProtKB-UniRule"/>
</dbReference>
<dbReference type="CDD" id="cd05389">
    <property type="entry name" value="CobQ_N"/>
    <property type="match status" value="1"/>
</dbReference>
<dbReference type="CDD" id="cd01750">
    <property type="entry name" value="GATase1_CobQ"/>
    <property type="match status" value="1"/>
</dbReference>
<dbReference type="Gene3D" id="3.40.50.880">
    <property type="match status" value="1"/>
</dbReference>
<dbReference type="Gene3D" id="3.40.50.300">
    <property type="entry name" value="P-loop containing nucleotide triphosphate hydrolases"/>
    <property type="match status" value="1"/>
</dbReference>
<dbReference type="HAMAP" id="MF_00028">
    <property type="entry name" value="CobQ"/>
    <property type="match status" value="1"/>
</dbReference>
<dbReference type="InterPro" id="IPR029062">
    <property type="entry name" value="Class_I_gatase-like"/>
</dbReference>
<dbReference type="InterPro" id="IPR002586">
    <property type="entry name" value="CobQ/CobB/MinD/ParA_Nub-bd_dom"/>
</dbReference>
<dbReference type="InterPro" id="IPR033949">
    <property type="entry name" value="CobQ_GATase1"/>
</dbReference>
<dbReference type="InterPro" id="IPR047045">
    <property type="entry name" value="CobQ_N"/>
</dbReference>
<dbReference type="InterPro" id="IPR004459">
    <property type="entry name" value="CobQ_synth"/>
</dbReference>
<dbReference type="InterPro" id="IPR011698">
    <property type="entry name" value="GATase_3"/>
</dbReference>
<dbReference type="InterPro" id="IPR027417">
    <property type="entry name" value="P-loop_NTPase"/>
</dbReference>
<dbReference type="NCBIfam" id="TIGR00313">
    <property type="entry name" value="cobQ"/>
    <property type="match status" value="1"/>
</dbReference>
<dbReference type="NCBIfam" id="NF001989">
    <property type="entry name" value="PRK00784.1"/>
    <property type="match status" value="1"/>
</dbReference>
<dbReference type="PANTHER" id="PTHR21343:SF1">
    <property type="entry name" value="COBYRIC ACID SYNTHASE"/>
    <property type="match status" value="1"/>
</dbReference>
<dbReference type="PANTHER" id="PTHR21343">
    <property type="entry name" value="DETHIOBIOTIN SYNTHETASE"/>
    <property type="match status" value="1"/>
</dbReference>
<dbReference type="Pfam" id="PF01656">
    <property type="entry name" value="CbiA"/>
    <property type="match status" value="1"/>
</dbReference>
<dbReference type="Pfam" id="PF07685">
    <property type="entry name" value="GATase_3"/>
    <property type="match status" value="1"/>
</dbReference>
<dbReference type="SUPFAM" id="SSF52317">
    <property type="entry name" value="Class I glutamine amidotransferase-like"/>
    <property type="match status" value="1"/>
</dbReference>
<dbReference type="SUPFAM" id="SSF52540">
    <property type="entry name" value="P-loop containing nucleoside triphosphate hydrolases"/>
    <property type="match status" value="1"/>
</dbReference>
<dbReference type="PROSITE" id="PS51274">
    <property type="entry name" value="GATASE_COBBQ"/>
    <property type="match status" value="1"/>
</dbReference>